<sequence>MSSSKYKRVMLKISGEALSGKKGFGFDFDVTQRIAKEIKEIVDMGIEVGAVVGGGNIWRGRNGEEMDRTTADYMGMLATCINALALQDSLENIGVKTRVQTAIEMKEVAEPFIRRRAMRHLEKKRVVIFAAGTGNPYFSTDTTAALRAAEIEADAILLAKKVDGVYDKDPNKYDDAKKFDKLTYIEVLEKGLQVMDSTATSLCMDNNIPILVFGLDKPNNIKKVIMGEQIGTIVSK</sequence>
<organism>
    <name type="scientific">Clostridium novyi (strain NT)</name>
    <dbReference type="NCBI Taxonomy" id="386415"/>
    <lineage>
        <taxon>Bacteria</taxon>
        <taxon>Bacillati</taxon>
        <taxon>Bacillota</taxon>
        <taxon>Clostridia</taxon>
        <taxon>Eubacteriales</taxon>
        <taxon>Clostridiaceae</taxon>
        <taxon>Clostridium</taxon>
    </lineage>
</organism>
<name>PYRH_CLONN</name>
<protein>
    <recommendedName>
        <fullName evidence="1">Uridylate kinase</fullName>
        <shortName evidence="1">UK</shortName>
        <ecNumber evidence="1">2.7.4.22</ecNumber>
    </recommendedName>
    <alternativeName>
        <fullName evidence="1">Uridine monophosphate kinase</fullName>
        <shortName evidence="1">UMP kinase</shortName>
        <shortName evidence="1">UMPK</shortName>
    </alternativeName>
</protein>
<gene>
    <name evidence="1" type="primary">pyrH</name>
    <name type="ordered locus">NT01CX_2147</name>
</gene>
<accession>A0Q0R8</accession>
<evidence type="ECO:0000255" key="1">
    <source>
        <dbReference type="HAMAP-Rule" id="MF_01220"/>
    </source>
</evidence>
<feature type="chain" id="PRO_1000053913" description="Uridylate kinase">
    <location>
        <begin position="1"/>
        <end position="236"/>
    </location>
</feature>
<feature type="region of interest" description="Involved in allosteric activation by GTP" evidence="1">
    <location>
        <begin position="20"/>
        <end position="25"/>
    </location>
</feature>
<feature type="binding site" evidence="1">
    <location>
        <begin position="12"/>
        <end position="15"/>
    </location>
    <ligand>
        <name>ATP</name>
        <dbReference type="ChEBI" id="CHEBI:30616"/>
    </ligand>
</feature>
<feature type="binding site" evidence="1">
    <location>
        <position position="54"/>
    </location>
    <ligand>
        <name>UMP</name>
        <dbReference type="ChEBI" id="CHEBI:57865"/>
    </ligand>
</feature>
<feature type="binding site" evidence="1">
    <location>
        <position position="55"/>
    </location>
    <ligand>
        <name>ATP</name>
        <dbReference type="ChEBI" id="CHEBI:30616"/>
    </ligand>
</feature>
<feature type="binding site" evidence="1">
    <location>
        <position position="59"/>
    </location>
    <ligand>
        <name>ATP</name>
        <dbReference type="ChEBI" id="CHEBI:30616"/>
    </ligand>
</feature>
<feature type="binding site" evidence="1">
    <location>
        <position position="72"/>
    </location>
    <ligand>
        <name>UMP</name>
        <dbReference type="ChEBI" id="CHEBI:57865"/>
    </ligand>
</feature>
<feature type="binding site" evidence="1">
    <location>
        <begin position="133"/>
        <end position="140"/>
    </location>
    <ligand>
        <name>UMP</name>
        <dbReference type="ChEBI" id="CHEBI:57865"/>
    </ligand>
</feature>
<feature type="binding site" evidence="1">
    <location>
        <position position="166"/>
    </location>
    <ligand>
        <name>ATP</name>
        <dbReference type="ChEBI" id="CHEBI:30616"/>
    </ligand>
</feature>
<feature type="binding site" evidence="1">
    <location>
        <position position="169"/>
    </location>
    <ligand>
        <name>ATP</name>
        <dbReference type="ChEBI" id="CHEBI:30616"/>
    </ligand>
</feature>
<keyword id="KW-0021">Allosteric enzyme</keyword>
<keyword id="KW-0067">ATP-binding</keyword>
<keyword id="KW-0963">Cytoplasm</keyword>
<keyword id="KW-0418">Kinase</keyword>
<keyword id="KW-0547">Nucleotide-binding</keyword>
<keyword id="KW-0665">Pyrimidine biosynthesis</keyword>
<keyword id="KW-1185">Reference proteome</keyword>
<keyword id="KW-0808">Transferase</keyword>
<proteinExistence type="inferred from homology"/>
<dbReference type="EC" id="2.7.4.22" evidence="1"/>
<dbReference type="EMBL" id="CP000382">
    <property type="protein sequence ID" value="ABK62122.1"/>
    <property type="molecule type" value="Genomic_DNA"/>
</dbReference>
<dbReference type="RefSeq" id="WP_011722220.1">
    <property type="nucleotide sequence ID" value="NC_008593.1"/>
</dbReference>
<dbReference type="SMR" id="A0Q0R8"/>
<dbReference type="STRING" id="386415.NT01CX_2147"/>
<dbReference type="KEGG" id="cno:NT01CX_2147"/>
<dbReference type="eggNOG" id="COG0528">
    <property type="taxonomic scope" value="Bacteria"/>
</dbReference>
<dbReference type="HOGENOM" id="CLU_033861_0_0_9"/>
<dbReference type="UniPathway" id="UPA00159">
    <property type="reaction ID" value="UER00275"/>
</dbReference>
<dbReference type="Proteomes" id="UP000008220">
    <property type="component" value="Chromosome"/>
</dbReference>
<dbReference type="GO" id="GO:0005737">
    <property type="term" value="C:cytoplasm"/>
    <property type="evidence" value="ECO:0007669"/>
    <property type="project" value="UniProtKB-SubCell"/>
</dbReference>
<dbReference type="GO" id="GO:0005524">
    <property type="term" value="F:ATP binding"/>
    <property type="evidence" value="ECO:0007669"/>
    <property type="project" value="UniProtKB-KW"/>
</dbReference>
<dbReference type="GO" id="GO:0033862">
    <property type="term" value="F:UMP kinase activity"/>
    <property type="evidence" value="ECO:0007669"/>
    <property type="project" value="UniProtKB-EC"/>
</dbReference>
<dbReference type="GO" id="GO:0044210">
    <property type="term" value="P:'de novo' CTP biosynthetic process"/>
    <property type="evidence" value="ECO:0007669"/>
    <property type="project" value="UniProtKB-UniRule"/>
</dbReference>
<dbReference type="GO" id="GO:0006225">
    <property type="term" value="P:UDP biosynthetic process"/>
    <property type="evidence" value="ECO:0007669"/>
    <property type="project" value="TreeGrafter"/>
</dbReference>
<dbReference type="CDD" id="cd04254">
    <property type="entry name" value="AAK_UMPK-PyrH-Ec"/>
    <property type="match status" value="1"/>
</dbReference>
<dbReference type="FunFam" id="3.40.1160.10:FF:000001">
    <property type="entry name" value="Uridylate kinase"/>
    <property type="match status" value="1"/>
</dbReference>
<dbReference type="Gene3D" id="3.40.1160.10">
    <property type="entry name" value="Acetylglutamate kinase-like"/>
    <property type="match status" value="1"/>
</dbReference>
<dbReference type="HAMAP" id="MF_01220_B">
    <property type="entry name" value="PyrH_B"/>
    <property type="match status" value="1"/>
</dbReference>
<dbReference type="InterPro" id="IPR036393">
    <property type="entry name" value="AceGlu_kinase-like_sf"/>
</dbReference>
<dbReference type="InterPro" id="IPR001048">
    <property type="entry name" value="Asp/Glu/Uridylate_kinase"/>
</dbReference>
<dbReference type="InterPro" id="IPR011817">
    <property type="entry name" value="Uridylate_kinase"/>
</dbReference>
<dbReference type="InterPro" id="IPR015963">
    <property type="entry name" value="Uridylate_kinase_bac"/>
</dbReference>
<dbReference type="NCBIfam" id="TIGR02075">
    <property type="entry name" value="pyrH_bact"/>
    <property type="match status" value="1"/>
</dbReference>
<dbReference type="PANTHER" id="PTHR42833">
    <property type="entry name" value="URIDYLATE KINASE"/>
    <property type="match status" value="1"/>
</dbReference>
<dbReference type="PANTHER" id="PTHR42833:SF4">
    <property type="entry name" value="URIDYLATE KINASE PUMPKIN, CHLOROPLASTIC"/>
    <property type="match status" value="1"/>
</dbReference>
<dbReference type="Pfam" id="PF00696">
    <property type="entry name" value="AA_kinase"/>
    <property type="match status" value="1"/>
</dbReference>
<dbReference type="PIRSF" id="PIRSF005650">
    <property type="entry name" value="Uridylate_kin"/>
    <property type="match status" value="1"/>
</dbReference>
<dbReference type="SUPFAM" id="SSF53633">
    <property type="entry name" value="Carbamate kinase-like"/>
    <property type="match status" value="1"/>
</dbReference>
<comment type="function">
    <text evidence="1">Catalyzes the reversible phosphorylation of UMP to UDP.</text>
</comment>
<comment type="catalytic activity">
    <reaction evidence="1">
        <text>UMP + ATP = UDP + ADP</text>
        <dbReference type="Rhea" id="RHEA:24400"/>
        <dbReference type="ChEBI" id="CHEBI:30616"/>
        <dbReference type="ChEBI" id="CHEBI:57865"/>
        <dbReference type="ChEBI" id="CHEBI:58223"/>
        <dbReference type="ChEBI" id="CHEBI:456216"/>
        <dbReference type="EC" id="2.7.4.22"/>
    </reaction>
</comment>
<comment type="activity regulation">
    <text evidence="1">Allosterically activated by GTP. Inhibited by UTP.</text>
</comment>
<comment type="pathway">
    <text evidence="1">Pyrimidine metabolism; CTP biosynthesis via de novo pathway; UDP from UMP (UMPK route): step 1/1.</text>
</comment>
<comment type="subunit">
    <text evidence="1">Homohexamer.</text>
</comment>
<comment type="subcellular location">
    <subcellularLocation>
        <location evidence="1">Cytoplasm</location>
    </subcellularLocation>
</comment>
<comment type="similarity">
    <text evidence="1">Belongs to the UMP kinase family.</text>
</comment>
<reference key="1">
    <citation type="journal article" date="2006" name="Nat. Biotechnol.">
        <title>The genome and transcriptomes of the anti-tumor agent Clostridium novyi-NT.</title>
        <authorList>
            <person name="Bettegowda C."/>
            <person name="Huang X."/>
            <person name="Lin J."/>
            <person name="Cheong I."/>
            <person name="Kohli M."/>
            <person name="Szabo S.A."/>
            <person name="Zhang X."/>
            <person name="Diaz L.A. Jr."/>
            <person name="Velculescu V.E."/>
            <person name="Parmigiani G."/>
            <person name="Kinzler K.W."/>
            <person name="Vogelstein B."/>
            <person name="Zhou S."/>
        </authorList>
    </citation>
    <scope>NUCLEOTIDE SEQUENCE [LARGE SCALE GENOMIC DNA]</scope>
    <source>
        <strain>NT</strain>
    </source>
</reference>